<feature type="chain" id="PRO_0000229113" description="2,3-bisphosphoglycerate-dependent phosphoglycerate mutase">
    <location>
        <begin position="1"/>
        <end position="249"/>
    </location>
</feature>
<feature type="active site" description="Tele-phosphohistidine intermediate" evidence="1 2">
    <location>
        <position position="9"/>
    </location>
</feature>
<feature type="active site" description="Proton donor/acceptor" evidence="1">
    <location>
        <position position="87"/>
    </location>
</feature>
<feature type="binding site" evidence="2 3">
    <location>
        <position position="8"/>
    </location>
    <ligand>
        <name>(2R)-2,3-bisphosphoglycerate</name>
        <dbReference type="ChEBI" id="CHEBI:58248"/>
    </ligand>
</feature>
<feature type="binding site" evidence="2 3">
    <location>
        <position position="9"/>
    </location>
    <ligand>
        <name>(2R)-2,3-bisphosphoglycerate</name>
        <dbReference type="ChEBI" id="CHEBI:58248"/>
    </ligand>
</feature>
<feature type="binding site" evidence="2 3">
    <location>
        <position position="15"/>
    </location>
    <ligand>
        <name>(2R)-2,3-bisphosphoglycerate</name>
        <dbReference type="ChEBI" id="CHEBI:58248"/>
    </ligand>
</feature>
<feature type="binding site" evidence="2 3">
    <location>
        <position position="21"/>
    </location>
    <ligand>
        <name>(2R)-2,3-bisphosphoglycerate</name>
        <dbReference type="ChEBI" id="CHEBI:58248"/>
    </ligand>
</feature>
<feature type="binding site" evidence="2 3">
    <location>
        <position position="21"/>
    </location>
    <ligand>
        <name>(2R)-3-phosphoglycerate</name>
        <dbReference type="ChEBI" id="CHEBI:58272"/>
    </ligand>
</feature>
<feature type="binding site" evidence="2 3">
    <location>
        <position position="22"/>
    </location>
    <ligand>
        <name>(2R)-2,3-bisphosphoglycerate</name>
        <dbReference type="ChEBI" id="CHEBI:58248"/>
    </ligand>
</feature>
<feature type="binding site" evidence="2 3">
    <location>
        <position position="22"/>
    </location>
    <ligand>
        <name>(2R)-3-phosphoglycerate</name>
        <dbReference type="ChEBI" id="CHEBI:58272"/>
    </ligand>
</feature>
<feature type="binding site" evidence="2 3">
    <location>
        <position position="60"/>
    </location>
    <ligand>
        <name>(2R)-2,3-bisphosphoglycerate</name>
        <dbReference type="ChEBI" id="CHEBI:58248"/>
    </ligand>
</feature>
<feature type="binding site" evidence="2 3">
    <location>
        <position position="87"/>
    </location>
    <ligand>
        <name>(2R)-2,3-bisphosphoglycerate</name>
        <dbReference type="ChEBI" id="CHEBI:58248"/>
    </ligand>
</feature>
<feature type="binding site" evidence="2 3">
    <location>
        <position position="87"/>
    </location>
    <ligand>
        <name>(2R)-3-phosphoglycerate</name>
        <dbReference type="ChEBI" id="CHEBI:58272"/>
    </ligand>
</feature>
<feature type="binding site" evidence="2 3">
    <location>
        <position position="90"/>
    </location>
    <ligand>
        <name>(2R)-2,3-bisphosphoglycerate</name>
        <dbReference type="ChEBI" id="CHEBI:58248"/>
    </ligand>
</feature>
<feature type="binding site" evidence="2 3">
    <location>
        <position position="90"/>
    </location>
    <ligand>
        <name>(2R)-3-phosphoglycerate</name>
        <dbReference type="ChEBI" id="CHEBI:58272"/>
    </ligand>
</feature>
<feature type="binding site" evidence="2 3">
    <location>
        <position position="98"/>
    </location>
    <ligand>
        <name>(2R)-2,3-bisphosphoglycerate</name>
        <dbReference type="ChEBI" id="CHEBI:58248"/>
    </ligand>
</feature>
<feature type="binding site" evidence="2 3">
    <location>
        <position position="98"/>
    </location>
    <ligand>
        <name>(2R)-3-phosphoglycerate</name>
        <dbReference type="ChEBI" id="CHEBI:58272"/>
    </ligand>
</feature>
<feature type="binding site" evidence="2 3">
    <location>
        <position position="114"/>
    </location>
    <ligand>
        <name>(2R)-2,3-bisphosphoglycerate</name>
        <dbReference type="ChEBI" id="CHEBI:58248"/>
    </ligand>
</feature>
<feature type="binding site" evidence="2 3">
    <location>
        <position position="114"/>
    </location>
    <ligand>
        <name>(2R)-3-phosphoglycerate</name>
        <dbReference type="ChEBI" id="CHEBI:58272"/>
    </ligand>
</feature>
<feature type="binding site" evidence="2 3">
    <location>
        <position position="115"/>
    </location>
    <ligand>
        <name>(2R)-2,3-bisphosphoglycerate</name>
        <dbReference type="ChEBI" id="CHEBI:58248"/>
    </ligand>
</feature>
<feature type="binding site" evidence="2 3">
    <location>
        <position position="115"/>
    </location>
    <ligand>
        <name>(2R)-3-phosphoglycerate</name>
        <dbReference type="ChEBI" id="CHEBI:58272"/>
    </ligand>
</feature>
<feature type="binding site" evidence="2 3">
    <location>
        <position position="182"/>
    </location>
    <ligand>
        <name>(2R)-2,3-bisphosphoglycerate</name>
        <dbReference type="ChEBI" id="CHEBI:58248"/>
    </ligand>
</feature>
<feature type="binding site" evidence="2 3">
    <location>
        <position position="183"/>
    </location>
    <ligand>
        <name>(2R)-2,3-bisphosphoglycerate</name>
        <dbReference type="ChEBI" id="CHEBI:58248"/>
    </ligand>
</feature>
<feature type="binding site" evidence="2 3">
    <location>
        <position position="184"/>
    </location>
    <ligand>
        <name>(2R)-2,3-bisphosphoglycerate</name>
        <dbReference type="ChEBI" id="CHEBI:58248"/>
    </ligand>
</feature>
<feature type="binding site" evidence="2 3">
    <location>
        <position position="184"/>
    </location>
    <ligand>
        <name>(2R)-3-phosphoglycerate</name>
        <dbReference type="ChEBI" id="CHEBI:58272"/>
    </ligand>
</feature>
<feature type="site" description="Transition state stabilizer" evidence="1">
    <location>
        <position position="182"/>
    </location>
</feature>
<feature type="strand" evidence="5">
    <location>
        <begin position="2"/>
        <end position="8"/>
    </location>
</feature>
<feature type="helix" evidence="5">
    <location>
        <begin position="13"/>
        <end position="16"/>
    </location>
</feature>
<feature type="helix" evidence="5">
    <location>
        <begin position="30"/>
        <end position="45"/>
    </location>
</feature>
<feature type="strand" evidence="5">
    <location>
        <begin position="51"/>
        <end position="55"/>
    </location>
</feature>
<feature type="helix" evidence="5">
    <location>
        <begin position="59"/>
        <end position="72"/>
    </location>
</feature>
<feature type="strand" evidence="5">
    <location>
        <begin position="79"/>
        <end position="81"/>
    </location>
</feature>
<feature type="helix" evidence="5">
    <location>
        <begin position="83"/>
        <end position="85"/>
    </location>
</feature>
<feature type="helix" evidence="5">
    <location>
        <begin position="91"/>
        <end position="93"/>
    </location>
</feature>
<feature type="helix" evidence="5">
    <location>
        <begin position="98"/>
        <end position="105"/>
    </location>
</feature>
<feature type="helix" evidence="5">
    <location>
        <begin position="107"/>
        <end position="115"/>
    </location>
</feature>
<feature type="helix" evidence="5">
    <location>
        <begin position="136"/>
        <end position="138"/>
    </location>
</feature>
<feature type="helix" evidence="5">
    <location>
        <begin position="143"/>
        <end position="145"/>
    </location>
</feature>
<feature type="helix" evidence="5">
    <location>
        <begin position="152"/>
        <end position="165"/>
    </location>
</feature>
<feature type="helix" evidence="5">
    <location>
        <begin position="167"/>
        <end position="172"/>
    </location>
</feature>
<feature type="strand" evidence="5">
    <location>
        <begin position="177"/>
        <end position="181"/>
    </location>
</feature>
<feature type="helix" evidence="5">
    <location>
        <begin position="183"/>
        <end position="193"/>
    </location>
</feature>
<feature type="helix" evidence="5">
    <location>
        <begin position="200"/>
        <end position="203"/>
    </location>
</feature>
<feature type="strand" evidence="5">
    <location>
        <begin position="212"/>
        <end position="216"/>
    </location>
</feature>
<feature type="strand" evidence="5">
    <location>
        <begin position="222"/>
        <end position="227"/>
    </location>
</feature>
<feature type="helix" evidence="4">
    <location>
        <begin position="231"/>
        <end position="235"/>
    </location>
</feature>
<gene>
    <name evidence="1" type="primary">gpmA</name>
    <name type="ordered locus">BURPS1710b_0662</name>
</gene>
<proteinExistence type="evidence at protein level"/>
<organism>
    <name type="scientific">Burkholderia pseudomallei (strain 1710b)</name>
    <dbReference type="NCBI Taxonomy" id="320372"/>
    <lineage>
        <taxon>Bacteria</taxon>
        <taxon>Pseudomonadati</taxon>
        <taxon>Pseudomonadota</taxon>
        <taxon>Betaproteobacteria</taxon>
        <taxon>Burkholderiales</taxon>
        <taxon>Burkholderiaceae</taxon>
        <taxon>Burkholderia</taxon>
        <taxon>pseudomallei group</taxon>
    </lineage>
</organism>
<keyword id="KW-0002">3D-structure</keyword>
<keyword id="KW-0312">Gluconeogenesis</keyword>
<keyword id="KW-0324">Glycolysis</keyword>
<keyword id="KW-0413">Isomerase</keyword>
<protein>
    <recommendedName>
        <fullName evidence="1">2,3-bisphosphoglycerate-dependent phosphoglycerate mutase</fullName>
        <shortName evidence="1">BPG-dependent PGAM</shortName>
        <shortName evidence="1">PGAM</shortName>
        <shortName evidence="1">Phosphoglyceromutase</shortName>
        <shortName evidence="1">dPGM</shortName>
        <ecNumber evidence="1">5.4.2.11</ecNumber>
    </recommendedName>
</protein>
<sequence length="249" mass="27893">MYKLVLIRHGESTWNKENRFTGWVDVDLTEQGNREARQAGQLLKEAGYTFDIAYTSVLKRAIRTLWHVQDQMDLMYVPVVHSWRLNERHYGALSGLNKAETAAKYGDEQVLVWRRSYDTPPPALEPGDERAPYADPRYAKVPREQLPLTECLKDTVARVLPLWNESIAPAVKAGKQVLIAAHGNSLRALIKYLDGISDADIVGLNIPNGVPLVYELDESLTPIRHYYLGDQEAIAKAQAAVAQQGKSAA</sequence>
<evidence type="ECO:0000255" key="1">
    <source>
        <dbReference type="HAMAP-Rule" id="MF_01039"/>
    </source>
</evidence>
<evidence type="ECO:0000269" key="2">
    <source>
    </source>
</evidence>
<evidence type="ECO:0007744" key="3">
    <source>
        <dbReference type="PDB" id="3FDZ"/>
    </source>
</evidence>
<evidence type="ECO:0007829" key="4">
    <source>
        <dbReference type="PDB" id="3EZN"/>
    </source>
</evidence>
<evidence type="ECO:0007829" key="5">
    <source>
        <dbReference type="PDB" id="3GP3"/>
    </source>
</evidence>
<accession>Q3JWH7</accession>
<name>GPMA_BURP1</name>
<reference key="1">
    <citation type="journal article" date="2010" name="Genome Biol. Evol.">
        <title>Continuing evolution of Burkholderia mallei through genome reduction and large-scale rearrangements.</title>
        <authorList>
            <person name="Losada L."/>
            <person name="Ronning C.M."/>
            <person name="DeShazer D."/>
            <person name="Woods D."/>
            <person name="Fedorova N."/>
            <person name="Kim H.S."/>
            <person name="Shabalina S.A."/>
            <person name="Pearson T.R."/>
            <person name="Brinkac L."/>
            <person name="Tan P."/>
            <person name="Nandi T."/>
            <person name="Crabtree J."/>
            <person name="Badger J."/>
            <person name="Beckstrom-Sternberg S."/>
            <person name="Saqib M."/>
            <person name="Schutzer S.E."/>
            <person name="Keim P."/>
            <person name="Nierman W.C."/>
        </authorList>
    </citation>
    <scope>NUCLEOTIDE SEQUENCE [LARGE SCALE GENOMIC DNA]</scope>
    <source>
        <strain>1710b</strain>
    </source>
</reference>
<reference key="2">
    <citation type="journal article" date="2011" name="Acta Crystallogr. F">
        <title>An ensemble of structures of Burkholderia pseudomallei 2,3-bisphosphoglycerate-dependent phosphoglycerate mutase.</title>
        <authorList>
            <person name="Davies D.R."/>
            <person name="Staker B.L."/>
            <person name="Abendroth J.A."/>
            <person name="Edwards T.E."/>
            <person name="Hartley R."/>
            <person name="Leonard J."/>
            <person name="Kim H."/>
            <person name="Rychel A.L."/>
            <person name="Hewitt S.N."/>
            <person name="Myler P.J."/>
            <person name="Stewart L.J."/>
        </authorList>
    </citation>
    <scope>X-RAY CRYSTALLOGRAPHY (1.50 ANGSTROMS) IN COMPLEXES WITH 2,3-BISPHOSPHOGLYCERATE; 3-PHOSPHO-D-GLYCERATE AND VANADATE</scope>
    <scope>ACTIVE SITE</scope>
    <scope>SUBUNIT</scope>
    <source>
        <strain>1710b</strain>
    </source>
</reference>
<comment type="function">
    <text evidence="1">Catalyzes the interconversion of 2-phosphoglycerate and 3-phosphoglycerate.</text>
</comment>
<comment type="catalytic activity">
    <reaction evidence="1">
        <text>(2R)-2-phosphoglycerate = (2R)-3-phosphoglycerate</text>
        <dbReference type="Rhea" id="RHEA:15901"/>
        <dbReference type="ChEBI" id="CHEBI:58272"/>
        <dbReference type="ChEBI" id="CHEBI:58289"/>
        <dbReference type="EC" id="5.4.2.11"/>
    </reaction>
</comment>
<comment type="pathway">
    <text evidence="1">Carbohydrate degradation; glycolysis; pyruvate from D-glyceraldehyde 3-phosphate: step 3/5.</text>
</comment>
<comment type="subunit">
    <text evidence="1 2">Homodimer.</text>
</comment>
<comment type="similarity">
    <text evidence="1">Belongs to the phosphoglycerate mutase family. BPG-dependent PGAM subfamily.</text>
</comment>
<dbReference type="EC" id="5.4.2.11" evidence="1"/>
<dbReference type="EMBL" id="CP000124">
    <property type="protein sequence ID" value="ABA50316.1"/>
    <property type="molecule type" value="Genomic_DNA"/>
</dbReference>
<dbReference type="RefSeq" id="WP_004198007.1">
    <property type="nucleotide sequence ID" value="NC_007434.1"/>
</dbReference>
<dbReference type="PDB" id="3EZN">
    <property type="method" value="X-ray"/>
    <property type="resolution" value="2.10 A"/>
    <property type="chains" value="A/B=1-249"/>
</dbReference>
<dbReference type="PDB" id="3FDZ">
    <property type="method" value="X-ray"/>
    <property type="resolution" value="2.25 A"/>
    <property type="chains" value="A/B=1-249"/>
</dbReference>
<dbReference type="PDB" id="3GP3">
    <property type="method" value="X-ray"/>
    <property type="resolution" value="1.50 A"/>
    <property type="chains" value="A/B/C/D=1-249"/>
</dbReference>
<dbReference type="PDB" id="3GP5">
    <property type="method" value="X-ray"/>
    <property type="resolution" value="2.25 A"/>
    <property type="chains" value="A/B=1-249"/>
</dbReference>
<dbReference type="PDB" id="3GW8">
    <property type="method" value="X-ray"/>
    <property type="resolution" value="1.93 A"/>
    <property type="chains" value="A/B=1-249"/>
</dbReference>
<dbReference type="PDB" id="3LNT">
    <property type="method" value="X-ray"/>
    <property type="resolution" value="2.10 A"/>
    <property type="chains" value="A/B=1-249"/>
</dbReference>
<dbReference type="PDBsum" id="3EZN"/>
<dbReference type="PDBsum" id="3FDZ"/>
<dbReference type="PDBsum" id="3GP3"/>
<dbReference type="PDBsum" id="3GP5"/>
<dbReference type="PDBsum" id="3GW8"/>
<dbReference type="PDBsum" id="3LNT"/>
<dbReference type="SMR" id="Q3JWH7"/>
<dbReference type="DrugBank" id="DB02580">
    <property type="generic name" value="Pentaglyme"/>
</dbReference>
<dbReference type="EnsemblBacteria" id="ABA50316">
    <property type="protein sequence ID" value="ABA50316"/>
    <property type="gene ID" value="BURPS1710b_0662"/>
</dbReference>
<dbReference type="GeneID" id="93058961"/>
<dbReference type="KEGG" id="bpm:BURPS1710b_0662"/>
<dbReference type="HOGENOM" id="CLU_033323_1_1_4"/>
<dbReference type="BRENDA" id="5.4.2.11">
    <property type="organism ID" value="1031"/>
</dbReference>
<dbReference type="UniPathway" id="UPA00109">
    <property type="reaction ID" value="UER00186"/>
</dbReference>
<dbReference type="EvolutionaryTrace" id="Q3JWH7"/>
<dbReference type="Proteomes" id="UP000002700">
    <property type="component" value="Chromosome I"/>
</dbReference>
<dbReference type="GO" id="GO:0004619">
    <property type="term" value="F:phosphoglycerate mutase activity"/>
    <property type="evidence" value="ECO:0007669"/>
    <property type="project" value="UniProtKB-EC"/>
</dbReference>
<dbReference type="GO" id="GO:0006094">
    <property type="term" value="P:gluconeogenesis"/>
    <property type="evidence" value="ECO:0007669"/>
    <property type="project" value="UniProtKB-UniRule"/>
</dbReference>
<dbReference type="GO" id="GO:0006096">
    <property type="term" value="P:glycolytic process"/>
    <property type="evidence" value="ECO:0007669"/>
    <property type="project" value="UniProtKB-UniRule"/>
</dbReference>
<dbReference type="CDD" id="cd07067">
    <property type="entry name" value="HP_PGM_like"/>
    <property type="match status" value="1"/>
</dbReference>
<dbReference type="FunFam" id="3.40.50.1240:FF:000003">
    <property type="entry name" value="2,3-bisphosphoglycerate-dependent phosphoglycerate mutase"/>
    <property type="match status" value="1"/>
</dbReference>
<dbReference type="Gene3D" id="3.40.50.1240">
    <property type="entry name" value="Phosphoglycerate mutase-like"/>
    <property type="match status" value="1"/>
</dbReference>
<dbReference type="HAMAP" id="MF_01039">
    <property type="entry name" value="PGAM_GpmA"/>
    <property type="match status" value="1"/>
</dbReference>
<dbReference type="InterPro" id="IPR013078">
    <property type="entry name" value="His_Pase_superF_clade-1"/>
</dbReference>
<dbReference type="InterPro" id="IPR029033">
    <property type="entry name" value="His_PPase_superfam"/>
</dbReference>
<dbReference type="InterPro" id="IPR001345">
    <property type="entry name" value="PG/BPGM_mutase_AS"/>
</dbReference>
<dbReference type="InterPro" id="IPR005952">
    <property type="entry name" value="Phosphogly_mut1"/>
</dbReference>
<dbReference type="NCBIfam" id="TIGR01258">
    <property type="entry name" value="pgm_1"/>
    <property type="match status" value="1"/>
</dbReference>
<dbReference type="NCBIfam" id="NF010713">
    <property type="entry name" value="PRK14115.1"/>
    <property type="match status" value="1"/>
</dbReference>
<dbReference type="PANTHER" id="PTHR11931">
    <property type="entry name" value="PHOSPHOGLYCERATE MUTASE"/>
    <property type="match status" value="1"/>
</dbReference>
<dbReference type="Pfam" id="PF00300">
    <property type="entry name" value="His_Phos_1"/>
    <property type="match status" value="2"/>
</dbReference>
<dbReference type="PIRSF" id="PIRSF000709">
    <property type="entry name" value="6PFK_2-Ptase"/>
    <property type="match status" value="1"/>
</dbReference>
<dbReference type="SMART" id="SM00855">
    <property type="entry name" value="PGAM"/>
    <property type="match status" value="1"/>
</dbReference>
<dbReference type="SUPFAM" id="SSF53254">
    <property type="entry name" value="Phosphoglycerate mutase-like"/>
    <property type="match status" value="1"/>
</dbReference>
<dbReference type="PROSITE" id="PS00175">
    <property type="entry name" value="PG_MUTASE"/>
    <property type="match status" value="1"/>
</dbReference>